<feature type="chain" id="PRO_0000443475" description="FAD-binding monooxygenase moxY">
    <location>
        <begin position="1"/>
        <end position="626"/>
    </location>
</feature>
<feature type="region of interest" description="Disordered" evidence="3">
    <location>
        <begin position="1"/>
        <end position="47"/>
    </location>
</feature>
<feature type="compositionally biased region" description="Low complexity" evidence="3">
    <location>
        <begin position="1"/>
        <end position="23"/>
    </location>
</feature>
<feature type="compositionally biased region" description="Polar residues" evidence="3">
    <location>
        <begin position="31"/>
        <end position="47"/>
    </location>
</feature>
<feature type="binding site" evidence="1">
    <location>
        <begin position="96"/>
        <end position="99"/>
    </location>
    <ligand>
        <name>FAD</name>
        <dbReference type="ChEBI" id="CHEBI:57692"/>
    </ligand>
</feature>
<feature type="binding site" evidence="1">
    <location>
        <begin position="106"/>
        <end position="108"/>
    </location>
    <ligand>
        <name>NADP(+)</name>
        <dbReference type="ChEBI" id="CHEBI:58349"/>
    </ligand>
</feature>
<feature type="binding site" evidence="1">
    <location>
        <begin position="108"/>
        <end position="109"/>
    </location>
    <ligand>
        <name>FAD</name>
        <dbReference type="ChEBI" id="CHEBI:57692"/>
    </ligand>
</feature>
<feature type="binding site" evidence="1">
    <location>
        <position position="114"/>
    </location>
    <ligand>
        <name>FAD</name>
        <dbReference type="ChEBI" id="CHEBI:57692"/>
    </ligand>
</feature>
<feature type="binding site" evidence="1">
    <location>
        <begin position="243"/>
        <end position="249"/>
    </location>
    <ligand>
        <name>NADP(+)</name>
        <dbReference type="ChEBI" id="CHEBI:58349"/>
    </ligand>
</feature>
<feature type="binding site" evidence="1">
    <location>
        <begin position="266"/>
        <end position="267"/>
    </location>
    <ligand>
        <name>NADP(+)</name>
        <dbReference type="ChEBI" id="CHEBI:58349"/>
    </ligand>
</feature>
<feature type="site" description="Transition state stabilizer" evidence="1">
    <location>
        <position position="359"/>
    </location>
</feature>
<comment type="function">
    <text evidence="2 4 5 9 12 13 14">FAD-binding monooxygenase; part of the fragmented gene cluster that mediates the biosynthesis of dothistromin (DOTH), a polyketide toxin very similar in structure to the aflatoxin precursor, versicolorin B (PubMed:12039746, PubMed:17683963, PubMed:22069571, PubMed:23207690, PubMed:23448391). The first step of the pathway is the conversion of acetate to norsolorinic acid (NOR) and requires the fatty acid synthase subunits hexA and hexB, as well as the polyketide synthase pksA (PubMed:16649078, PubMed:23207690). PksA combines a hexanoyl starter unit and 7 malonyl-CoA extender units to synthesize the precursor NOR (By similarity). The hexanoyl starter unit is provided to the acyl-carrier protein (ACP) domain by the fungal fatty acid synthase hexA/hexB (By similarity). The second step is the conversion of NOR to averantin (AVN) and requires the norsolorinic acid ketoreductase nor1, which catalyzes the dehydration of norsolorinic acid to form (1'S)-averantin (PubMed:23207690). The cytochrome P450 monooxygenase avnA then catalyzes the hydroxylation of AVN to 5'hydroxyaverantin (HAVN) (PubMed:23207690). The next step is performed by adhA that transforms HAVN to averufin (AVF) (PubMed:23207690). Averufin might then be converted to hydroxyversicolorone by cypX and avfA (PubMed:23207690). Hydroxyversicolorone is further converted versiconal hemiacetal acetate (VHA) by moxY (PubMed:23207690). VHA is then the substrate for the versiconal hemiacetal acetate esterase est1 to yield versiconal (VAL) (PubMed:23207690). Versicolorin B synthase vbsA then converts VAL to versicolorin B (VERB) by closing the bisfuran ring (PubMed:16649078, PubMed:23207690). Then, the activity of the versicolorin B desaturase verB leads to versicolorin A (VERA) (PubMed:23207690). DotB, a predicted chloroperoxidase, may perform epoxidation of the A-ring of VERA (PubMed:23207690). Alternatively, a cytochrome P450, such as cypX or avnA could catalyze this step (PubMed:23207690). It is also possible that another, uncharacterized, cytochrome P450 enzyme is responsible for this step (PubMed:23207690). Opening of the epoxide could potentially be achieved by the epoxide hydrolase epoA (PubMed:23207690). However, epoA seems not to be required for DOTH biosynthesis, but other epoxide hydrolases may have the ability to complement this hydrolysis (PubMed:23207690). Alternatively, opening of the epoxide ring could be achieved non-enzymatically (PubMed:23207690). The next step is the deoxygenation of ring A to yield the 5,8-dihydroxyanthraquinone which is most likely catalyzed by the NADPH dehydrogenase encoded by ver1 (PubMed:23207690). The last stages of DOTH biosynthesis are proposed to involve hydroxylation of the bisfuran (PubMed:23207690). OrdB and norB might have oxidative roles here (PubMed:23207690). An alternative possibility is that cytochrome P450 monoogenases such as avnA and cypX might perform these steps in addition to previously proposed steps (PubMed:23207690).</text>
</comment>
<comment type="cofactor">
    <cofactor evidence="1">
        <name>FAD</name>
        <dbReference type="ChEBI" id="CHEBI:57692"/>
    </cofactor>
    <text evidence="1">Binds 1 FAD per subunit.</text>
</comment>
<comment type="pathway">
    <text evidence="9 13">Mycotoxin biosynthesis.</text>
</comment>
<comment type="induction">
    <text evidence="6 7">Expression is positively regulated by the dothistromin-specific transcription factor aflR (PubMed:23207690). Dothistromin biosynthetic proteins are co-regulated, showing a high level of expression at ealy exponential phase with a subsequent decline in older cultures (PubMed:17683963).</text>
</comment>
<comment type="similarity">
    <text evidence="11">Belongs to the FAD-binding monooxygenase family.</text>
</comment>
<proteinExistence type="evidence at transcript level"/>
<gene>
    <name evidence="10" type="primary">moxY</name>
    <name evidence="8" type="synonym">moxA</name>
</gene>
<evidence type="ECO:0000250" key="1">
    <source>
        <dbReference type="UniProtKB" id="H3JQW0"/>
    </source>
</evidence>
<evidence type="ECO:0000250" key="2">
    <source>
        <dbReference type="UniProtKB" id="Q6UEF3"/>
    </source>
</evidence>
<evidence type="ECO:0000256" key="3">
    <source>
        <dbReference type="SAM" id="MobiDB-lite"/>
    </source>
</evidence>
<evidence type="ECO:0000269" key="4">
    <source>
    </source>
</evidence>
<evidence type="ECO:0000269" key="5">
    <source>
    </source>
</evidence>
<evidence type="ECO:0000269" key="6">
    <source>
    </source>
</evidence>
<evidence type="ECO:0000269" key="7">
    <source>
    </source>
</evidence>
<evidence type="ECO:0000303" key="8">
    <source>
    </source>
</evidence>
<evidence type="ECO:0000303" key="9">
    <source>
    </source>
</evidence>
<evidence type="ECO:0000303" key="10">
    <source>
    </source>
</evidence>
<evidence type="ECO:0000305" key="11"/>
<evidence type="ECO:0000305" key="12">
    <source>
    </source>
</evidence>
<evidence type="ECO:0000305" key="13">
    <source>
    </source>
</evidence>
<evidence type="ECO:0000305" key="14">
    <source>
    </source>
</evidence>
<reference key="1">
    <citation type="journal article" date="2006" name="Mycopathologia">
        <title>A polyketide synthase gene required for biosynthesis of the aflatoxin-like toxin, dothistromin.</title>
        <authorList>
            <person name="Bradshaw R.E."/>
            <person name="Jin H."/>
            <person name="Morgan B.S."/>
            <person name="Schwelm A."/>
            <person name="Teddy O.R."/>
            <person name="Young C.A."/>
            <person name="Zhang S."/>
        </authorList>
    </citation>
    <scope>NUCLEOTIDE SEQUENCE [GENOMIC DNA]</scope>
    <source>
        <strain>NZE7</strain>
    </source>
</reference>
<reference key="2">
    <citation type="journal article" date="2007" name="Fungal Genet. Biol.">
        <title>A fragmented aflatoxin-like gene cluster in the forest pathogen Dothistroma septosporum.</title>
        <authorList>
            <person name="Zhang S."/>
            <person name="Schwelm A."/>
            <person name="Jin H."/>
            <person name="Collins L.J."/>
            <person name="Bradshaw R.E."/>
        </authorList>
    </citation>
    <scope>NUCLEOTIDE SEQUENCE [GENOMIC DNA]</scope>
    <scope>FUNCTION</scope>
    <source>
        <strain>NZE7</strain>
    </source>
</reference>
<reference key="3">
    <citation type="submission" date="2010-07" db="EMBL/GenBank/DDBJ databases">
        <authorList>
            <person name="Zhang S."/>
            <person name="Bradshaw R.E."/>
        </authorList>
    </citation>
    <scope>NUCLEOTIDE SEQUENCE [GENOMIC DNA]</scope>
    <source>
        <strain>NZE1 / ATCC MYA-605</strain>
    </source>
</reference>
<reference key="4">
    <citation type="journal article" date="2002" name="Appl. Environ. Microbiol.">
        <title>Dothistroma pini, a forest pathogen, contains homologs of aflatoxin biosynthetic pathway genes.</title>
        <authorList>
            <person name="Bradshaw R.E."/>
            <person name="Bhatnagar D."/>
            <person name="Ganley R.J."/>
            <person name="Gillman C.J."/>
            <person name="Monahan B.J."/>
            <person name="Seconi J.M."/>
        </authorList>
    </citation>
    <scope>FUNCTION</scope>
    <source>
        <strain>ATCC MYA-605</strain>
    </source>
</reference>
<reference key="5">
    <citation type="journal article" date="2010" name="Toxins">
        <title>Genetics of dothistromin biosynthesis of Dothistroma septosporum: an update.</title>
        <authorList>
            <person name="Schwelm A."/>
            <person name="Bradshaw R.E."/>
        </authorList>
    </citation>
    <scope>REVIEW ON FUNCTION</scope>
    <scope>PATHWAY</scope>
</reference>
<reference key="6">
    <citation type="journal article" date="2013" name="Fungal Genet. Biol.">
        <title>Dothistromin genes at multiple separate loci are regulated by AflR.</title>
        <authorList>
            <person name="Chettri P."/>
            <person name="Ehrlich K.C."/>
            <person name="Cary J.W."/>
            <person name="Collemare J."/>
            <person name="Cox M.P."/>
            <person name="Griffiths S.A."/>
            <person name="Olson M.A."/>
            <person name="de Wit P.J."/>
            <person name="Bradshaw R.E."/>
        </authorList>
    </citation>
    <scope>FUNCTION</scope>
    <scope>INDUCTION</scope>
    <scope>PATHWAY</scope>
</reference>
<reference key="7">
    <citation type="journal article" date="2013" name="New Phytol.">
        <title>Fragmentation of an aflatoxin-like gene cluster in a forest pathogen.</title>
        <authorList>
            <person name="Bradshaw R.E."/>
            <person name="Slot J.C."/>
            <person name="Moore G.G."/>
            <person name="Chettri P."/>
            <person name="de Wit P.J."/>
            <person name="Ehrlich K.C."/>
            <person name="Ganley A.R."/>
            <person name="Olson M.A."/>
            <person name="Rokas A."/>
            <person name="Carbone I."/>
            <person name="Cox M.P."/>
        </authorList>
    </citation>
    <scope>FUNCTION</scope>
</reference>
<organism>
    <name type="scientific">Dothistroma septosporum</name>
    <name type="common">Red band needle blight fungus</name>
    <name type="synonym">Mycosphaerella pini</name>
    <dbReference type="NCBI Taxonomy" id="64363"/>
    <lineage>
        <taxon>Eukaryota</taxon>
        <taxon>Fungi</taxon>
        <taxon>Dikarya</taxon>
        <taxon>Ascomycota</taxon>
        <taxon>Pezizomycotina</taxon>
        <taxon>Dothideomycetes</taxon>
        <taxon>Dothideomycetidae</taxon>
        <taxon>Mycosphaerellales</taxon>
        <taxon>Mycosphaerellaceae</taxon>
        <taxon>Dothistroma</taxon>
    </lineage>
</organism>
<name>MOXY_DOTSE</name>
<sequence length="626" mass="71572">MAPFLSAHGESASSSSSSSPTPSRHTRNQHVDYSTPGSTGYNIPQNTTWNAPSNRKIRVLTIGAGISGILMAYQLQKHCENVEHVVYEKNEDVGGTWLENRYPRAGCDIPSHAYTYQFALNPDWPRFFSFAPDIWAYLNKVCETFDLKKYMRFHVEVVGCYWQEHAGEWVVKLREHLPNHEVREFEDRCNVLLYGAGVLNNFKFPDIPGLQDRFKGRVIHTARWPKDYKEEDWAKERVAVIGSGASSIQTVPGMQPYAKHLDIFVRTGVWFGVIAGNSGSQAKEYSEEERENFRRDPKAVVAHAREIEEQVNGMWGGFYAGSMGQKMGSGYFRTRMAEHIKDERLLQGFSPKFGLGCRRITPGDPYMEAIQKENVDVHFTPVESCTEKGVVGGDGVEREVDTVICATGFDVSYRPRFPVIGKDGVDLREKWDLCPESYLGLAIPDMPNFLTFIGPTWPIENGSVMAPLHSVSEYAIQLIKRMQNENIRSWVPRQDITDSFNDHVQEWIKHTVWKDDCRSWYKNNETGRVNAIWPGSSLHYQQVIERPRYEDFEIHSFNDNPWAHLGMGWTVQDRKGPKEEDVCPYFNVKNIDPKWYEACGGDSRLLVERPEESSQAGQQFLWPTGT</sequence>
<accession>Q30DW9</accession>
<dbReference type="EC" id="1.14.13.-" evidence="11"/>
<dbReference type="EMBL" id="DQ149246">
    <property type="protein sequence ID" value="AAZ95013.1"/>
    <property type="molecule type" value="Genomic_DNA"/>
</dbReference>
<dbReference type="SMR" id="Q30DW9"/>
<dbReference type="OMA" id="MVFHTEV"/>
<dbReference type="GO" id="GO:0050660">
    <property type="term" value="F:flavin adenine dinucleotide binding"/>
    <property type="evidence" value="ECO:0007669"/>
    <property type="project" value="InterPro"/>
</dbReference>
<dbReference type="GO" id="GO:0004499">
    <property type="term" value="F:N,N-dimethylaniline monooxygenase activity"/>
    <property type="evidence" value="ECO:0007669"/>
    <property type="project" value="InterPro"/>
</dbReference>
<dbReference type="GO" id="GO:0050661">
    <property type="term" value="F:NADP binding"/>
    <property type="evidence" value="ECO:0007669"/>
    <property type="project" value="InterPro"/>
</dbReference>
<dbReference type="Gene3D" id="3.50.50.60">
    <property type="entry name" value="FAD/NAD(P)-binding domain"/>
    <property type="match status" value="2"/>
</dbReference>
<dbReference type="InterPro" id="IPR051209">
    <property type="entry name" value="FAD-bind_Monooxygenase_sf"/>
</dbReference>
<dbReference type="InterPro" id="IPR036188">
    <property type="entry name" value="FAD/NAD-bd_sf"/>
</dbReference>
<dbReference type="InterPro" id="IPR020946">
    <property type="entry name" value="Flavin_mOase-like"/>
</dbReference>
<dbReference type="PANTHER" id="PTHR42877:SF1">
    <property type="entry name" value="FAD-BINDING MONOOXYGENASE STCW"/>
    <property type="match status" value="1"/>
</dbReference>
<dbReference type="PANTHER" id="PTHR42877">
    <property type="entry name" value="L-ORNITHINE N(5)-MONOOXYGENASE-RELATED"/>
    <property type="match status" value="1"/>
</dbReference>
<dbReference type="Pfam" id="PF00743">
    <property type="entry name" value="FMO-like"/>
    <property type="match status" value="1"/>
</dbReference>
<dbReference type="SUPFAM" id="SSF51905">
    <property type="entry name" value="FAD/NAD(P)-binding domain"/>
    <property type="match status" value="1"/>
</dbReference>
<keyword id="KW-0274">FAD</keyword>
<keyword id="KW-0285">Flavoprotein</keyword>
<keyword id="KW-0503">Monooxygenase</keyword>
<keyword id="KW-0521">NADP</keyword>
<keyword id="KW-0560">Oxidoreductase</keyword>
<protein>
    <recommendedName>
        <fullName evidence="11">FAD-binding monooxygenase moxY</fullName>
        <ecNumber evidence="11">1.14.13.-</ecNumber>
    </recommendedName>
    <alternativeName>
        <fullName evidence="10">Dothistromin biosynthesis protein moxY</fullName>
    </alternativeName>
</protein>